<proteinExistence type="evidence at protein level"/>
<organism>
    <name type="scientific">Acinetobacter baylyi (strain ATCC 33305 / BD413 / ADP1)</name>
    <dbReference type="NCBI Taxonomy" id="62977"/>
    <lineage>
        <taxon>Bacteria</taxon>
        <taxon>Pseudomonadati</taxon>
        <taxon>Pseudomonadota</taxon>
        <taxon>Gammaproteobacteria</taxon>
        <taxon>Moraxellales</taxon>
        <taxon>Moraxellaceae</taxon>
        <taxon>Acinetobacter</taxon>
    </lineage>
</organism>
<comment type="function">
    <text evidence="1">Acts as a PilB inhibitor to control natural transformation. Inhibits type IV pili (T4P) extension by specifically binding and inhibiting the pilus extension ATPase PilB but not TfpB. This activity probably modulates T4P extension under different environmental conditions.</text>
</comment>
<comment type="subunit">
    <text evidence="1">Interacts with PilB but not with TfpB.</text>
</comment>
<comment type="induction">
    <text evidence="1">Repressed by CpiR (PubMed:34145281). Different environmental conditions may derepress cpiA to decrease pilus activity (PubMed:34145281).</text>
</comment>
<evidence type="ECO:0000269" key="1">
    <source>
    </source>
</evidence>
<evidence type="ECO:0000303" key="2">
    <source>
    </source>
</evidence>
<evidence type="ECO:0000312" key="3">
    <source>
        <dbReference type="EMBL" id="CAG69169.1"/>
    </source>
</evidence>
<feature type="chain" id="PRO_0000453799" description="PilB-specific inhibitory protein CpiA">
    <location>
        <begin position="1"/>
        <end position="138"/>
    </location>
</feature>
<name>CPIA_ACIAD</name>
<accession>Q6F9U4</accession>
<gene>
    <name evidence="2" type="primary">cpiA</name>
    <name evidence="3" type="ordered locus">ACIAD2394</name>
</gene>
<dbReference type="EMBL" id="CR543861">
    <property type="protein sequence ID" value="CAG69169.1"/>
    <property type="molecule type" value="Genomic_DNA"/>
</dbReference>
<dbReference type="KEGG" id="aci:ACIAD2394"/>
<dbReference type="HOGENOM" id="CLU_1850773_0_0_6"/>
<dbReference type="Proteomes" id="UP000000430">
    <property type="component" value="Chromosome"/>
</dbReference>
<sequence length="138" mass="16564">MIMKLVSDQIQERKFIIEFQLFNLIDELGLSVKKDHERKIFIYALLYVQLMHQPYSAMNTISQLEPVTTYEKIKISYYTNYLSTYLSTSYSQERERIISIISKTFIDSINPEMNLYNFNDFVTMFAFKKLLQQVFHEN</sequence>
<reference key="1">
    <citation type="journal article" date="2004" name="Nucleic Acids Res.">
        <title>Unique features revealed by the genome sequence of Acinetobacter sp. ADP1, a versatile and naturally transformation competent bacterium.</title>
        <authorList>
            <person name="Barbe V."/>
            <person name="Vallenet D."/>
            <person name="Fonknechten N."/>
            <person name="Kreimeyer A."/>
            <person name="Oztas S."/>
            <person name="Labarre L."/>
            <person name="Cruveiller S."/>
            <person name="Robert C."/>
            <person name="Duprat S."/>
            <person name="Wincker P."/>
            <person name="Ornston L.N."/>
            <person name="Weissenbach J."/>
            <person name="Marliere P."/>
            <person name="Cohen G.N."/>
            <person name="Medigue C."/>
        </authorList>
    </citation>
    <scope>NUCLEOTIDE SEQUENCE [LARGE SCALE GENOMIC DNA]</scope>
    <source>
        <strain>ATCC 33305 / BD413 / ADP1</strain>
    </source>
</reference>
<reference key="2">
    <citation type="journal article" date="2021" name="Nat. Commun.">
        <title>Acinetobacter baylyi regulates type IV pilus synthesis by employing two extension motors and a motor protein inhibitor.</title>
        <authorList>
            <person name="Ellison C.K."/>
            <person name="Dalia T.N."/>
            <person name="Klancher C.A."/>
            <person name="Shaevitz J.W."/>
            <person name="Gitai Z."/>
            <person name="Dalia A.B."/>
        </authorList>
    </citation>
    <scope>FUNCTION</scope>
    <scope>INTERACTION WITH PILB</scope>
    <scope>INDUCTION</scope>
    <source>
        <strain>ATCC 33305 / BD413 / ADP1</strain>
    </source>
</reference>
<protein>
    <recommendedName>
        <fullName evidence="2">PilB-specific inhibitory protein CpiA</fullName>
    </recommendedName>
    <alternativeName>
        <fullName evidence="2">Competence pilus inhibition actuator</fullName>
    </alternativeName>
</protein>